<feature type="signal peptide" evidence="3">
    <location>
        <begin position="1"/>
        <end position="18"/>
    </location>
</feature>
<feature type="chain" id="PRO_5000219799" description="Probable glucan endo-1,3-beta-glucosidase eglC">
    <location>
        <begin position="19"/>
        <end position="430"/>
    </location>
</feature>
<feature type="propeptide" id="PRO_0000395144" description="Removed in mature form" evidence="3">
    <location>
        <begin position="431"/>
        <end position="460"/>
    </location>
</feature>
<feature type="region of interest" description="Disordered" evidence="4">
    <location>
        <begin position="379"/>
        <end position="437"/>
    </location>
</feature>
<feature type="compositionally biased region" description="Low complexity" evidence="4">
    <location>
        <begin position="380"/>
        <end position="437"/>
    </location>
</feature>
<feature type="active site" description="Proton donor" evidence="2">
    <location>
        <position position="128"/>
    </location>
</feature>
<feature type="active site" description="Nucleophile" evidence="2">
    <location>
        <position position="239"/>
    </location>
</feature>
<feature type="lipid moiety-binding region" description="GPI-anchor amidated serine" evidence="3">
    <location>
        <position position="430"/>
    </location>
</feature>
<feature type="glycosylation site" description="N-linked (GlcNAc...) asparagine" evidence="3">
    <location>
        <position position="183"/>
    </location>
</feature>
<feature type="glycosylation site" description="N-linked (GlcNAc...) asparagine" evidence="3">
    <location>
        <position position="312"/>
    </location>
</feature>
<feature type="glycosylation site" description="N-linked (GlcNAc...) asparagine" evidence="3">
    <location>
        <position position="367"/>
    </location>
</feature>
<feature type="glycosylation site" description="N-linked (GlcNAc...) asparagine" evidence="3">
    <location>
        <position position="373"/>
    </location>
</feature>
<accession>A2QH21</accession>
<protein>
    <recommendedName>
        <fullName>Probable glucan endo-1,3-beta-glucosidase eglC</fullName>
        <ecNumber>3.2.1.39</ecNumber>
    </recommendedName>
    <alternativeName>
        <fullName>Endo-1,3-beta-glucanase eglC</fullName>
    </alternativeName>
    <alternativeName>
        <fullName>Laminarinase eglC</fullName>
    </alternativeName>
</protein>
<gene>
    <name type="primary">eglC</name>
    <name type="ORF">An03g05290</name>
</gene>
<organism>
    <name type="scientific">Aspergillus niger (strain ATCC MYA-4892 / CBS 513.88 / FGSC A1513)</name>
    <dbReference type="NCBI Taxonomy" id="425011"/>
    <lineage>
        <taxon>Eukaryota</taxon>
        <taxon>Fungi</taxon>
        <taxon>Dikarya</taxon>
        <taxon>Ascomycota</taxon>
        <taxon>Pezizomycotina</taxon>
        <taxon>Eurotiomycetes</taxon>
        <taxon>Eurotiomycetidae</taxon>
        <taxon>Eurotiales</taxon>
        <taxon>Aspergillaceae</taxon>
        <taxon>Aspergillus</taxon>
        <taxon>Aspergillus subgen. Circumdati</taxon>
    </lineage>
</organism>
<keyword id="KW-0119">Carbohydrate metabolism</keyword>
<keyword id="KW-1003">Cell membrane</keyword>
<keyword id="KW-0134">Cell wall</keyword>
<keyword id="KW-0961">Cell wall biogenesis/degradation</keyword>
<keyword id="KW-0325">Glycoprotein</keyword>
<keyword id="KW-0336">GPI-anchor</keyword>
<keyword id="KW-0378">Hydrolase</keyword>
<keyword id="KW-0449">Lipoprotein</keyword>
<keyword id="KW-0472">Membrane</keyword>
<keyword id="KW-0624">Polysaccharide degradation</keyword>
<keyword id="KW-1185">Reference proteome</keyword>
<keyword id="KW-0964">Secreted</keyword>
<keyword id="KW-0732">Signal</keyword>
<comment type="function">
    <text evidence="1">Glucanases play a role in cell expansion during growth, in cell-cell fusion during mating, and in spore release during sporulation. This enzyme may be involved in beta-glucan degradation and also function biosynthetically as a transglycosylase (By similarity).</text>
</comment>
<comment type="catalytic activity">
    <reaction>
        <text>Hydrolysis of (1-&gt;3)-beta-D-glucosidic linkages in (1-&gt;3)-beta-D-glucans.</text>
        <dbReference type="EC" id="3.2.1.39"/>
    </reaction>
</comment>
<comment type="subcellular location">
    <subcellularLocation>
        <location evidence="1">Cell membrane</location>
        <topology evidence="1">Lipid-anchor</topology>
        <topology evidence="1">GPI-anchor</topology>
    </subcellularLocation>
    <subcellularLocation>
        <location evidence="1">Secreted</location>
        <location evidence="1">Cell wall</location>
    </subcellularLocation>
    <text evidence="1">Covalently-linked GPI-modified cell wall protein.</text>
</comment>
<comment type="PTM">
    <text evidence="1">The GPI-anchor is attached to the protein in the endoplasmic reticulum and serves to target the protein to the cell surface. There, the glucosamine-inositol phospholipid moiety is cleaved off and the GPI-modified mannoprotein is covalently attached via its lipidless GPI glycan remnant to the 1,6-beta-glucan of the outer cell wall layer (By similarity).</text>
</comment>
<comment type="similarity">
    <text evidence="5">Belongs to the glycosyl hydrolase 17 family.</text>
</comment>
<comment type="sequence caution" evidence="5">
    <conflict type="erroneous initiation">
        <sequence resource="EMBL-CDS" id="CAK49181"/>
    </conflict>
    <text>Extended N-terminus.</text>
</comment>
<dbReference type="EC" id="3.2.1.39"/>
<dbReference type="EMBL" id="AM270057">
    <property type="protein sequence ID" value="CAK49181.1"/>
    <property type="status" value="ALT_INIT"/>
    <property type="molecule type" value="Genomic_DNA"/>
</dbReference>
<dbReference type="RefSeq" id="XP_001390410.1">
    <property type="nucleotide sequence ID" value="XM_001390373.2"/>
</dbReference>
<dbReference type="SMR" id="A2QH21"/>
<dbReference type="CAZy" id="GH17">
    <property type="family name" value="Glycoside Hydrolase Family 17"/>
</dbReference>
<dbReference type="GlyCosmos" id="A2QH21">
    <property type="glycosylation" value="4 sites, No reported glycans"/>
</dbReference>
<dbReference type="EnsemblFungi" id="CAK49181">
    <property type="protein sequence ID" value="CAK49181"/>
    <property type="gene ID" value="An03g05290"/>
</dbReference>
<dbReference type="GeneID" id="4980518"/>
<dbReference type="KEGG" id="ang:An03g05290"/>
<dbReference type="Proteomes" id="UP000006706">
    <property type="component" value="Chromosome 6R"/>
</dbReference>
<dbReference type="GO" id="GO:0009986">
    <property type="term" value="C:cell surface"/>
    <property type="evidence" value="ECO:0007669"/>
    <property type="project" value="TreeGrafter"/>
</dbReference>
<dbReference type="GO" id="GO:0005576">
    <property type="term" value="C:extracellular region"/>
    <property type="evidence" value="ECO:0007669"/>
    <property type="project" value="UniProtKB-KW"/>
</dbReference>
<dbReference type="GO" id="GO:0009277">
    <property type="term" value="C:fungal-type cell wall"/>
    <property type="evidence" value="ECO:0007669"/>
    <property type="project" value="TreeGrafter"/>
</dbReference>
<dbReference type="GO" id="GO:0005886">
    <property type="term" value="C:plasma membrane"/>
    <property type="evidence" value="ECO:0007669"/>
    <property type="project" value="UniProtKB-SubCell"/>
</dbReference>
<dbReference type="GO" id="GO:0098552">
    <property type="term" value="C:side of membrane"/>
    <property type="evidence" value="ECO:0007669"/>
    <property type="project" value="UniProtKB-KW"/>
</dbReference>
<dbReference type="GO" id="GO:0042973">
    <property type="term" value="F:glucan endo-1,3-beta-D-glucosidase activity"/>
    <property type="evidence" value="ECO:0007669"/>
    <property type="project" value="UniProtKB-EC"/>
</dbReference>
<dbReference type="GO" id="GO:0071555">
    <property type="term" value="P:cell wall organization"/>
    <property type="evidence" value="ECO:0007669"/>
    <property type="project" value="UniProtKB-KW"/>
</dbReference>
<dbReference type="GO" id="GO:0000272">
    <property type="term" value="P:polysaccharide catabolic process"/>
    <property type="evidence" value="ECO:0007669"/>
    <property type="project" value="UniProtKB-KW"/>
</dbReference>
<dbReference type="FunFam" id="3.20.20.80:FF:000233">
    <property type="entry name" value="Probable glucan endo-1,3-beta-glucosidase eglC"/>
    <property type="match status" value="1"/>
</dbReference>
<dbReference type="Gene3D" id="3.20.20.80">
    <property type="entry name" value="Glycosidases"/>
    <property type="match status" value="1"/>
</dbReference>
<dbReference type="InterPro" id="IPR050732">
    <property type="entry name" value="Beta-glucan_modifiers"/>
</dbReference>
<dbReference type="InterPro" id="IPR000490">
    <property type="entry name" value="Glyco_hydro_17"/>
</dbReference>
<dbReference type="InterPro" id="IPR017853">
    <property type="entry name" value="Glycoside_hydrolase_SF"/>
</dbReference>
<dbReference type="PANTHER" id="PTHR16631">
    <property type="entry name" value="GLUCAN 1,3-BETA-GLUCOSIDASE"/>
    <property type="match status" value="1"/>
</dbReference>
<dbReference type="PANTHER" id="PTHR16631:SF13">
    <property type="entry name" value="GLUCAN ENDO-1,3-BETA-GLUCOSIDASE EGLC-RELATED"/>
    <property type="match status" value="1"/>
</dbReference>
<dbReference type="Pfam" id="PF00332">
    <property type="entry name" value="Glyco_hydro_17"/>
    <property type="match status" value="1"/>
</dbReference>
<dbReference type="SUPFAM" id="SSF51445">
    <property type="entry name" value="(Trans)glycosidases"/>
    <property type="match status" value="1"/>
</dbReference>
<reference key="1">
    <citation type="journal article" date="2007" name="Nat. Biotechnol.">
        <title>Genome sequencing and analysis of the versatile cell factory Aspergillus niger CBS 513.88.</title>
        <authorList>
            <person name="Pel H.J."/>
            <person name="de Winde J.H."/>
            <person name="Archer D.B."/>
            <person name="Dyer P.S."/>
            <person name="Hofmann G."/>
            <person name="Schaap P.J."/>
            <person name="Turner G."/>
            <person name="de Vries R.P."/>
            <person name="Albang R."/>
            <person name="Albermann K."/>
            <person name="Andersen M.R."/>
            <person name="Bendtsen J.D."/>
            <person name="Benen J.A.E."/>
            <person name="van den Berg M."/>
            <person name="Breestraat S."/>
            <person name="Caddick M.X."/>
            <person name="Contreras R."/>
            <person name="Cornell M."/>
            <person name="Coutinho P.M."/>
            <person name="Danchin E.G.J."/>
            <person name="Debets A.J.M."/>
            <person name="Dekker P."/>
            <person name="van Dijck P.W.M."/>
            <person name="van Dijk A."/>
            <person name="Dijkhuizen L."/>
            <person name="Driessen A.J.M."/>
            <person name="d'Enfert C."/>
            <person name="Geysens S."/>
            <person name="Goosen C."/>
            <person name="Groot G.S.P."/>
            <person name="de Groot P.W.J."/>
            <person name="Guillemette T."/>
            <person name="Henrissat B."/>
            <person name="Herweijer M."/>
            <person name="van den Hombergh J.P.T.W."/>
            <person name="van den Hondel C.A.M.J.J."/>
            <person name="van der Heijden R.T.J.M."/>
            <person name="van der Kaaij R.M."/>
            <person name="Klis F.M."/>
            <person name="Kools H.J."/>
            <person name="Kubicek C.P."/>
            <person name="van Kuyk P.A."/>
            <person name="Lauber J."/>
            <person name="Lu X."/>
            <person name="van der Maarel M.J.E.C."/>
            <person name="Meulenberg R."/>
            <person name="Menke H."/>
            <person name="Mortimer M.A."/>
            <person name="Nielsen J."/>
            <person name="Oliver S.G."/>
            <person name="Olsthoorn M."/>
            <person name="Pal K."/>
            <person name="van Peij N.N.M.E."/>
            <person name="Ram A.F.J."/>
            <person name="Rinas U."/>
            <person name="Roubos J.A."/>
            <person name="Sagt C.M.J."/>
            <person name="Schmoll M."/>
            <person name="Sun J."/>
            <person name="Ussery D."/>
            <person name="Varga J."/>
            <person name="Vervecken W."/>
            <person name="van de Vondervoort P.J.J."/>
            <person name="Wedler H."/>
            <person name="Woesten H.A.B."/>
            <person name="Zeng A.-P."/>
            <person name="van Ooyen A.J.J."/>
            <person name="Visser J."/>
            <person name="Stam H."/>
        </authorList>
    </citation>
    <scope>NUCLEOTIDE SEQUENCE [LARGE SCALE GENOMIC DNA]</scope>
    <source>
        <strain>ATCC MYA-4892 / CBS 513.88 / FGSC A1513</strain>
    </source>
</reference>
<evidence type="ECO:0000250" key="1"/>
<evidence type="ECO:0000250" key="2">
    <source>
        <dbReference type="UniProtKB" id="O22317"/>
    </source>
</evidence>
<evidence type="ECO:0000255" key="3"/>
<evidence type="ECO:0000256" key="4">
    <source>
        <dbReference type="SAM" id="MobiDB-lite"/>
    </source>
</evidence>
<evidence type="ECO:0000305" key="5"/>
<name>EGLC_ASPNC</name>
<proteinExistence type="inferred from homology"/>
<sequence length="460" mass="46347">MQLAQLAAFAMTLATSEAAYQGFNYGNKFSDESSKFQADFEAEFKAAKNLVGTSGFTSARLYTMIQAYSTSDVIEAIPAAIAQDTSLLLGLWASGGGMDNEITALKTAISQYGEELGKLVVGISVGSEDLYRNSVEGAEADAGVGVNPDELVEYIKEVRSVIAGTALADVSIGHVDTWDSWTNSSNSAVVEAVDWLGFDGYPFFQSSMANSIDNAKTLFEESVAKTKAVAGDKEVWITETGWPVSGDSQGDAVASIANAKTFWDEVGCPLFGNVNTWWYILQDASPTTPNPSFGIVGSTLSTTPLFDLSCKNSTTSSSSAVVSAAASSAAGSKAVGSSQASSGAAAWATSASGSAKPTFTVGRPGVNGTVFGNGTYPLRPSGSASARPSAGAISSGSGSSSSGSGSSGSTGTSATSGQSSSSGSSAAAGSSSPAAFSGASTLSGSLFGAVVAVFMTLAAL</sequence>